<proteinExistence type="inferred from homology"/>
<name>RPOA_DESAH</name>
<dbReference type="EC" id="2.7.7.6" evidence="1"/>
<dbReference type="EMBL" id="CP001087">
    <property type="protein sequence ID" value="ACN16665.1"/>
    <property type="molecule type" value="Genomic_DNA"/>
</dbReference>
<dbReference type="RefSeq" id="WP_015905415.1">
    <property type="nucleotide sequence ID" value="NC_012108.1"/>
</dbReference>
<dbReference type="SMR" id="C0Q9U7"/>
<dbReference type="STRING" id="177437.HRM2_36000"/>
<dbReference type="KEGG" id="dat:HRM2_36000"/>
<dbReference type="eggNOG" id="COG0202">
    <property type="taxonomic scope" value="Bacteria"/>
</dbReference>
<dbReference type="HOGENOM" id="CLU_053084_0_1_7"/>
<dbReference type="OrthoDB" id="9805706at2"/>
<dbReference type="Proteomes" id="UP000000442">
    <property type="component" value="Chromosome"/>
</dbReference>
<dbReference type="GO" id="GO:0005737">
    <property type="term" value="C:cytoplasm"/>
    <property type="evidence" value="ECO:0007669"/>
    <property type="project" value="UniProtKB-ARBA"/>
</dbReference>
<dbReference type="GO" id="GO:0000428">
    <property type="term" value="C:DNA-directed RNA polymerase complex"/>
    <property type="evidence" value="ECO:0007669"/>
    <property type="project" value="UniProtKB-KW"/>
</dbReference>
<dbReference type="GO" id="GO:0003677">
    <property type="term" value="F:DNA binding"/>
    <property type="evidence" value="ECO:0007669"/>
    <property type="project" value="UniProtKB-UniRule"/>
</dbReference>
<dbReference type="GO" id="GO:0003899">
    <property type="term" value="F:DNA-directed RNA polymerase activity"/>
    <property type="evidence" value="ECO:0007669"/>
    <property type="project" value="UniProtKB-UniRule"/>
</dbReference>
<dbReference type="GO" id="GO:0046983">
    <property type="term" value="F:protein dimerization activity"/>
    <property type="evidence" value="ECO:0007669"/>
    <property type="project" value="InterPro"/>
</dbReference>
<dbReference type="GO" id="GO:0006351">
    <property type="term" value="P:DNA-templated transcription"/>
    <property type="evidence" value="ECO:0007669"/>
    <property type="project" value="UniProtKB-UniRule"/>
</dbReference>
<dbReference type="CDD" id="cd06928">
    <property type="entry name" value="RNAP_alpha_NTD"/>
    <property type="match status" value="1"/>
</dbReference>
<dbReference type="FunFam" id="1.10.150.20:FF:000001">
    <property type="entry name" value="DNA-directed RNA polymerase subunit alpha"/>
    <property type="match status" value="1"/>
</dbReference>
<dbReference type="FunFam" id="2.170.120.12:FF:000001">
    <property type="entry name" value="DNA-directed RNA polymerase subunit alpha"/>
    <property type="match status" value="1"/>
</dbReference>
<dbReference type="Gene3D" id="1.10.150.20">
    <property type="entry name" value="5' to 3' exonuclease, C-terminal subdomain"/>
    <property type="match status" value="1"/>
</dbReference>
<dbReference type="Gene3D" id="2.170.120.12">
    <property type="entry name" value="DNA-directed RNA polymerase, insert domain"/>
    <property type="match status" value="1"/>
</dbReference>
<dbReference type="Gene3D" id="3.30.1360.10">
    <property type="entry name" value="RNA polymerase, RBP11-like subunit"/>
    <property type="match status" value="1"/>
</dbReference>
<dbReference type="HAMAP" id="MF_00059">
    <property type="entry name" value="RNApol_bact_RpoA"/>
    <property type="match status" value="1"/>
</dbReference>
<dbReference type="InterPro" id="IPR011262">
    <property type="entry name" value="DNA-dir_RNA_pol_insert"/>
</dbReference>
<dbReference type="InterPro" id="IPR011263">
    <property type="entry name" value="DNA-dir_RNA_pol_RpoA/D/Rpb3"/>
</dbReference>
<dbReference type="InterPro" id="IPR011773">
    <property type="entry name" value="DNA-dir_RpoA"/>
</dbReference>
<dbReference type="InterPro" id="IPR036603">
    <property type="entry name" value="RBP11-like"/>
</dbReference>
<dbReference type="InterPro" id="IPR011260">
    <property type="entry name" value="RNAP_asu_C"/>
</dbReference>
<dbReference type="InterPro" id="IPR036643">
    <property type="entry name" value="RNApol_insert_sf"/>
</dbReference>
<dbReference type="NCBIfam" id="NF003513">
    <property type="entry name" value="PRK05182.1-2"/>
    <property type="match status" value="1"/>
</dbReference>
<dbReference type="NCBIfam" id="NF003519">
    <property type="entry name" value="PRK05182.2-5"/>
    <property type="match status" value="1"/>
</dbReference>
<dbReference type="NCBIfam" id="TIGR02027">
    <property type="entry name" value="rpoA"/>
    <property type="match status" value="1"/>
</dbReference>
<dbReference type="Pfam" id="PF01000">
    <property type="entry name" value="RNA_pol_A_bac"/>
    <property type="match status" value="1"/>
</dbReference>
<dbReference type="Pfam" id="PF03118">
    <property type="entry name" value="RNA_pol_A_CTD"/>
    <property type="match status" value="1"/>
</dbReference>
<dbReference type="Pfam" id="PF01193">
    <property type="entry name" value="RNA_pol_L"/>
    <property type="match status" value="1"/>
</dbReference>
<dbReference type="SMART" id="SM00662">
    <property type="entry name" value="RPOLD"/>
    <property type="match status" value="1"/>
</dbReference>
<dbReference type="SUPFAM" id="SSF47789">
    <property type="entry name" value="C-terminal domain of RNA polymerase alpha subunit"/>
    <property type="match status" value="1"/>
</dbReference>
<dbReference type="SUPFAM" id="SSF56553">
    <property type="entry name" value="Insert subdomain of RNA polymerase alpha subunit"/>
    <property type="match status" value="1"/>
</dbReference>
<dbReference type="SUPFAM" id="SSF55257">
    <property type="entry name" value="RBP11-like subunits of RNA polymerase"/>
    <property type="match status" value="1"/>
</dbReference>
<reference key="1">
    <citation type="journal article" date="2009" name="Environ. Microbiol.">
        <title>Genome sequence of Desulfobacterium autotrophicum HRM2, a marine sulfate reducer oxidizing organic carbon completely to carbon dioxide.</title>
        <authorList>
            <person name="Strittmatter A.W."/>
            <person name="Liesegang H."/>
            <person name="Rabus R."/>
            <person name="Decker I."/>
            <person name="Amann J."/>
            <person name="Andres S."/>
            <person name="Henne A."/>
            <person name="Fricke W.F."/>
            <person name="Martinez-Arias R."/>
            <person name="Bartels D."/>
            <person name="Goesmann A."/>
            <person name="Krause L."/>
            <person name="Puehler A."/>
            <person name="Klenk H.P."/>
            <person name="Richter M."/>
            <person name="Schuler M."/>
            <person name="Gloeckner F.O."/>
            <person name="Meyerdierks A."/>
            <person name="Gottschalk G."/>
            <person name="Amann R."/>
        </authorList>
    </citation>
    <scope>NUCLEOTIDE SEQUENCE [LARGE SCALE GENOMIC DNA]</scope>
    <source>
        <strain>ATCC 43914 / DSM 3382 / VKM B-1955 / HRM2</strain>
    </source>
</reference>
<sequence>MSSDELVYMNWREIIMPEKVAVTTTSTYGKFVCEPLEKGYGITIGNSLRRIILSSLYGAAIVSVKFSEALHEYSVVSDVREDVSEIIMNLKEVKLKLDDPGDKILTINVKGEKFVTAADIISGDGRVEILNPEQHIATVSKGGELMMTMLVKTGKGYALAASNKDPEAPVGTIPIDSVFSPIKRVKYVVGASRIGQKTDYDKLTMEIWTDGSVTPEDSVAYAAKILKEQMNPFINFDEDIEPELVEKEHEGAAKNFNENLYRSVDELELSVRSSNCLKNAQILKIYQLVQKTDNEMLKTKNFGRKSLNEIKEVLTSMDLSLGMDLEGFEPPEEDQIKEGE</sequence>
<comment type="function">
    <text evidence="1">DNA-dependent RNA polymerase catalyzes the transcription of DNA into RNA using the four ribonucleoside triphosphates as substrates.</text>
</comment>
<comment type="catalytic activity">
    <reaction evidence="1">
        <text>RNA(n) + a ribonucleoside 5'-triphosphate = RNA(n+1) + diphosphate</text>
        <dbReference type="Rhea" id="RHEA:21248"/>
        <dbReference type="Rhea" id="RHEA-COMP:14527"/>
        <dbReference type="Rhea" id="RHEA-COMP:17342"/>
        <dbReference type="ChEBI" id="CHEBI:33019"/>
        <dbReference type="ChEBI" id="CHEBI:61557"/>
        <dbReference type="ChEBI" id="CHEBI:140395"/>
        <dbReference type="EC" id="2.7.7.6"/>
    </reaction>
</comment>
<comment type="subunit">
    <text evidence="1">Homodimer. The RNAP catalytic core consists of 2 alpha, 1 beta, 1 beta' and 1 omega subunit. When a sigma factor is associated with the core the holoenzyme is formed, which can initiate transcription.</text>
</comment>
<comment type="domain">
    <text evidence="1">The N-terminal domain is essential for RNAP assembly and basal transcription, whereas the C-terminal domain is involved in interaction with transcriptional regulators and with upstream promoter elements.</text>
</comment>
<comment type="similarity">
    <text evidence="1">Belongs to the RNA polymerase alpha chain family.</text>
</comment>
<protein>
    <recommendedName>
        <fullName evidence="1">DNA-directed RNA polymerase subunit alpha</fullName>
        <shortName evidence="1">RNAP subunit alpha</shortName>
        <ecNumber evidence="1">2.7.7.6</ecNumber>
    </recommendedName>
    <alternativeName>
        <fullName evidence="1">RNA polymerase subunit alpha</fullName>
    </alternativeName>
    <alternativeName>
        <fullName evidence="1">Transcriptase subunit alpha</fullName>
    </alternativeName>
</protein>
<evidence type="ECO:0000255" key="1">
    <source>
        <dbReference type="HAMAP-Rule" id="MF_00059"/>
    </source>
</evidence>
<feature type="chain" id="PRO_1000202354" description="DNA-directed RNA polymerase subunit alpha">
    <location>
        <begin position="1"/>
        <end position="340"/>
    </location>
</feature>
<feature type="region of interest" description="Alpha N-terminal domain (alpha-NTD)" evidence="1">
    <location>
        <begin position="1"/>
        <end position="237"/>
    </location>
</feature>
<feature type="region of interest" description="Alpha C-terminal domain (alpha-CTD)" evidence="1">
    <location>
        <begin position="256"/>
        <end position="340"/>
    </location>
</feature>
<organism>
    <name type="scientific">Desulforapulum autotrophicum (strain ATCC 43914 / DSM 3382 / VKM B-1955 / HRM2)</name>
    <name type="common">Desulfobacterium autotrophicum</name>
    <dbReference type="NCBI Taxonomy" id="177437"/>
    <lineage>
        <taxon>Bacteria</taxon>
        <taxon>Pseudomonadati</taxon>
        <taxon>Thermodesulfobacteriota</taxon>
        <taxon>Desulfobacteria</taxon>
        <taxon>Desulfobacterales</taxon>
        <taxon>Desulfobacteraceae</taxon>
        <taxon>Desulforapulum</taxon>
    </lineage>
</organism>
<gene>
    <name evidence="1" type="primary">rpoA</name>
    <name type="ordered locus">HRM2_36000</name>
</gene>
<keyword id="KW-0240">DNA-directed RNA polymerase</keyword>
<keyword id="KW-0548">Nucleotidyltransferase</keyword>
<keyword id="KW-1185">Reference proteome</keyword>
<keyword id="KW-0804">Transcription</keyword>
<keyword id="KW-0808">Transferase</keyword>
<accession>C0Q9U7</accession>